<protein>
    <recommendedName>
        <fullName evidence="1">Enolase</fullName>
        <ecNumber evidence="1">4.2.1.11</ecNumber>
    </recommendedName>
    <alternativeName>
        <fullName evidence="1">2-phospho-D-glycerate hydro-lyase</fullName>
    </alternativeName>
    <alternativeName>
        <fullName evidence="1">2-phosphoglycerate dehydratase</fullName>
    </alternativeName>
</protein>
<comment type="function">
    <text evidence="1">Catalyzes the reversible conversion of 2-phosphoglycerate (2-PG) into phosphoenolpyruvate (PEP). It is essential for the degradation of carbohydrates via glycolysis.</text>
</comment>
<comment type="catalytic activity">
    <reaction evidence="1">
        <text>(2R)-2-phosphoglycerate = phosphoenolpyruvate + H2O</text>
        <dbReference type="Rhea" id="RHEA:10164"/>
        <dbReference type="ChEBI" id="CHEBI:15377"/>
        <dbReference type="ChEBI" id="CHEBI:58289"/>
        <dbReference type="ChEBI" id="CHEBI:58702"/>
        <dbReference type="EC" id="4.2.1.11"/>
    </reaction>
</comment>
<comment type="cofactor">
    <cofactor evidence="1">
        <name>Mg(2+)</name>
        <dbReference type="ChEBI" id="CHEBI:18420"/>
    </cofactor>
    <text evidence="1">Binds a second Mg(2+) ion via substrate during catalysis.</text>
</comment>
<comment type="pathway">
    <text evidence="1">Carbohydrate degradation; glycolysis; pyruvate from D-glyceraldehyde 3-phosphate: step 4/5.</text>
</comment>
<comment type="subunit">
    <text evidence="1">Component of the RNA degradosome, a multiprotein complex involved in RNA processing and mRNA degradation.</text>
</comment>
<comment type="subcellular location">
    <subcellularLocation>
        <location evidence="1">Cytoplasm</location>
    </subcellularLocation>
    <subcellularLocation>
        <location evidence="1">Secreted</location>
    </subcellularLocation>
    <subcellularLocation>
        <location evidence="1">Cell surface</location>
    </subcellularLocation>
    <text evidence="1">Fractions of enolase are present in both the cytoplasm and on the cell surface.</text>
</comment>
<comment type="similarity">
    <text evidence="1">Belongs to the enolase family.</text>
</comment>
<accession>A7FLZ5</accession>
<feature type="chain" id="PRO_1000059462" description="Enolase">
    <location>
        <begin position="1"/>
        <end position="431"/>
    </location>
</feature>
<feature type="active site" description="Proton donor" evidence="1">
    <location>
        <position position="209"/>
    </location>
</feature>
<feature type="active site" description="Proton acceptor" evidence="1">
    <location>
        <position position="342"/>
    </location>
</feature>
<feature type="binding site" evidence="1">
    <location>
        <position position="167"/>
    </location>
    <ligand>
        <name>(2R)-2-phosphoglycerate</name>
        <dbReference type="ChEBI" id="CHEBI:58289"/>
    </ligand>
</feature>
<feature type="binding site" evidence="1">
    <location>
        <position position="246"/>
    </location>
    <ligand>
        <name>Mg(2+)</name>
        <dbReference type="ChEBI" id="CHEBI:18420"/>
    </ligand>
</feature>
<feature type="binding site" evidence="1">
    <location>
        <position position="290"/>
    </location>
    <ligand>
        <name>Mg(2+)</name>
        <dbReference type="ChEBI" id="CHEBI:18420"/>
    </ligand>
</feature>
<feature type="binding site" evidence="1">
    <location>
        <position position="317"/>
    </location>
    <ligand>
        <name>Mg(2+)</name>
        <dbReference type="ChEBI" id="CHEBI:18420"/>
    </ligand>
</feature>
<feature type="binding site" evidence="1">
    <location>
        <position position="342"/>
    </location>
    <ligand>
        <name>(2R)-2-phosphoglycerate</name>
        <dbReference type="ChEBI" id="CHEBI:58289"/>
    </ligand>
</feature>
<feature type="binding site" evidence="1">
    <location>
        <position position="371"/>
    </location>
    <ligand>
        <name>(2R)-2-phosphoglycerate</name>
        <dbReference type="ChEBI" id="CHEBI:58289"/>
    </ligand>
</feature>
<feature type="binding site" evidence="1">
    <location>
        <position position="372"/>
    </location>
    <ligand>
        <name>(2R)-2-phosphoglycerate</name>
        <dbReference type="ChEBI" id="CHEBI:58289"/>
    </ligand>
</feature>
<feature type="binding site" evidence="1">
    <location>
        <position position="393"/>
    </location>
    <ligand>
        <name>(2R)-2-phosphoglycerate</name>
        <dbReference type="ChEBI" id="CHEBI:58289"/>
    </ligand>
</feature>
<name>ENO_YERP3</name>
<keyword id="KW-0963">Cytoplasm</keyword>
<keyword id="KW-0324">Glycolysis</keyword>
<keyword id="KW-0456">Lyase</keyword>
<keyword id="KW-0460">Magnesium</keyword>
<keyword id="KW-0479">Metal-binding</keyword>
<keyword id="KW-0964">Secreted</keyword>
<sequence length="431" mass="45455">MSKIVKVIGREIIDSRGNPTVEAEVHLEGGFVGLAAAPSGASTGSREALELRDGDKSRFLGKGVLKAVAAVNGPIAQAVIGKDAKDQANIDKIMIDLDGTENKSQFGANAILAVSLAAAKAAAASKGMPLYEHIAELNGTPGKFSMPLPMMNIINGGEHADNNVDIQEFMIQPVGAKTLKEAVRIGSEVFHHLAKVLKAKGLNTAVGDEGGYAPNLGSNAEALAVIAEAVKAAGYELGKDVTLAMDCAASEFYKDGKYVLAGEGNKAFTSEEFTHFLEDLTKQYPIVSIEDGLDESDWAGFKYQTEVLGDKIQLVGDDLFVTNTKILKEGIEKGVANSILIKFNQIGSLTETLAAIKMAKDAGYTAVISHRSGETEDATIADLAVGTAAGQIKTGSMSRSDRVAKYNQLIRIEEALGDRAPFNGLKEVKGQ</sequence>
<reference key="1">
    <citation type="journal article" date="2007" name="PLoS Genet.">
        <title>The complete genome sequence of Yersinia pseudotuberculosis IP31758, the causative agent of Far East scarlet-like fever.</title>
        <authorList>
            <person name="Eppinger M."/>
            <person name="Rosovitz M.J."/>
            <person name="Fricke W.F."/>
            <person name="Rasko D.A."/>
            <person name="Kokorina G."/>
            <person name="Fayolle C."/>
            <person name="Lindler L.E."/>
            <person name="Carniel E."/>
            <person name="Ravel J."/>
        </authorList>
    </citation>
    <scope>NUCLEOTIDE SEQUENCE [LARGE SCALE GENOMIC DNA]</scope>
    <source>
        <strain>IP 31758</strain>
    </source>
</reference>
<proteinExistence type="inferred from homology"/>
<dbReference type="EC" id="4.2.1.11" evidence="1"/>
<dbReference type="EMBL" id="CP000720">
    <property type="protein sequence ID" value="ABS48779.1"/>
    <property type="molecule type" value="Genomic_DNA"/>
</dbReference>
<dbReference type="RefSeq" id="WP_011191770.1">
    <property type="nucleotide sequence ID" value="NC_009708.1"/>
</dbReference>
<dbReference type="SMR" id="A7FLZ5"/>
<dbReference type="GeneID" id="49787239"/>
<dbReference type="KEGG" id="ypi:YpsIP31758_3316"/>
<dbReference type="HOGENOM" id="CLU_031223_2_1_6"/>
<dbReference type="UniPathway" id="UPA00109">
    <property type="reaction ID" value="UER00187"/>
</dbReference>
<dbReference type="Proteomes" id="UP000002412">
    <property type="component" value="Chromosome"/>
</dbReference>
<dbReference type="GO" id="GO:0009986">
    <property type="term" value="C:cell surface"/>
    <property type="evidence" value="ECO:0007669"/>
    <property type="project" value="UniProtKB-SubCell"/>
</dbReference>
<dbReference type="GO" id="GO:0005576">
    <property type="term" value="C:extracellular region"/>
    <property type="evidence" value="ECO:0007669"/>
    <property type="project" value="UniProtKB-SubCell"/>
</dbReference>
<dbReference type="GO" id="GO:0000015">
    <property type="term" value="C:phosphopyruvate hydratase complex"/>
    <property type="evidence" value="ECO:0007669"/>
    <property type="project" value="InterPro"/>
</dbReference>
<dbReference type="GO" id="GO:0000287">
    <property type="term" value="F:magnesium ion binding"/>
    <property type="evidence" value="ECO:0007669"/>
    <property type="project" value="UniProtKB-UniRule"/>
</dbReference>
<dbReference type="GO" id="GO:0004634">
    <property type="term" value="F:phosphopyruvate hydratase activity"/>
    <property type="evidence" value="ECO:0007669"/>
    <property type="project" value="UniProtKB-UniRule"/>
</dbReference>
<dbReference type="GO" id="GO:0006096">
    <property type="term" value="P:glycolytic process"/>
    <property type="evidence" value="ECO:0007669"/>
    <property type="project" value="UniProtKB-UniRule"/>
</dbReference>
<dbReference type="CDD" id="cd03313">
    <property type="entry name" value="enolase"/>
    <property type="match status" value="1"/>
</dbReference>
<dbReference type="FunFam" id="3.20.20.120:FF:000001">
    <property type="entry name" value="Enolase"/>
    <property type="match status" value="1"/>
</dbReference>
<dbReference type="FunFam" id="3.30.390.10:FF:000001">
    <property type="entry name" value="Enolase"/>
    <property type="match status" value="1"/>
</dbReference>
<dbReference type="Gene3D" id="3.20.20.120">
    <property type="entry name" value="Enolase-like C-terminal domain"/>
    <property type="match status" value="1"/>
</dbReference>
<dbReference type="Gene3D" id="3.30.390.10">
    <property type="entry name" value="Enolase-like, N-terminal domain"/>
    <property type="match status" value="1"/>
</dbReference>
<dbReference type="HAMAP" id="MF_00318">
    <property type="entry name" value="Enolase"/>
    <property type="match status" value="1"/>
</dbReference>
<dbReference type="InterPro" id="IPR000941">
    <property type="entry name" value="Enolase"/>
</dbReference>
<dbReference type="InterPro" id="IPR036849">
    <property type="entry name" value="Enolase-like_C_sf"/>
</dbReference>
<dbReference type="InterPro" id="IPR029017">
    <property type="entry name" value="Enolase-like_N"/>
</dbReference>
<dbReference type="InterPro" id="IPR020810">
    <property type="entry name" value="Enolase_C"/>
</dbReference>
<dbReference type="InterPro" id="IPR020809">
    <property type="entry name" value="Enolase_CS"/>
</dbReference>
<dbReference type="InterPro" id="IPR020811">
    <property type="entry name" value="Enolase_N"/>
</dbReference>
<dbReference type="NCBIfam" id="TIGR01060">
    <property type="entry name" value="eno"/>
    <property type="match status" value="1"/>
</dbReference>
<dbReference type="PANTHER" id="PTHR11902">
    <property type="entry name" value="ENOLASE"/>
    <property type="match status" value="1"/>
</dbReference>
<dbReference type="PANTHER" id="PTHR11902:SF1">
    <property type="entry name" value="ENOLASE"/>
    <property type="match status" value="1"/>
</dbReference>
<dbReference type="Pfam" id="PF00113">
    <property type="entry name" value="Enolase_C"/>
    <property type="match status" value="1"/>
</dbReference>
<dbReference type="Pfam" id="PF03952">
    <property type="entry name" value="Enolase_N"/>
    <property type="match status" value="1"/>
</dbReference>
<dbReference type="PIRSF" id="PIRSF001400">
    <property type="entry name" value="Enolase"/>
    <property type="match status" value="1"/>
</dbReference>
<dbReference type="PRINTS" id="PR00148">
    <property type="entry name" value="ENOLASE"/>
</dbReference>
<dbReference type="SFLD" id="SFLDF00002">
    <property type="entry name" value="enolase"/>
    <property type="match status" value="1"/>
</dbReference>
<dbReference type="SFLD" id="SFLDG00178">
    <property type="entry name" value="enolase"/>
    <property type="match status" value="1"/>
</dbReference>
<dbReference type="SMART" id="SM01192">
    <property type="entry name" value="Enolase_C"/>
    <property type="match status" value="1"/>
</dbReference>
<dbReference type="SMART" id="SM01193">
    <property type="entry name" value="Enolase_N"/>
    <property type="match status" value="1"/>
</dbReference>
<dbReference type="SUPFAM" id="SSF51604">
    <property type="entry name" value="Enolase C-terminal domain-like"/>
    <property type="match status" value="1"/>
</dbReference>
<dbReference type="SUPFAM" id="SSF54826">
    <property type="entry name" value="Enolase N-terminal domain-like"/>
    <property type="match status" value="1"/>
</dbReference>
<dbReference type="PROSITE" id="PS00164">
    <property type="entry name" value="ENOLASE"/>
    <property type="match status" value="1"/>
</dbReference>
<organism>
    <name type="scientific">Yersinia pseudotuberculosis serotype O:1b (strain IP 31758)</name>
    <dbReference type="NCBI Taxonomy" id="349747"/>
    <lineage>
        <taxon>Bacteria</taxon>
        <taxon>Pseudomonadati</taxon>
        <taxon>Pseudomonadota</taxon>
        <taxon>Gammaproteobacteria</taxon>
        <taxon>Enterobacterales</taxon>
        <taxon>Yersiniaceae</taxon>
        <taxon>Yersinia</taxon>
    </lineage>
</organism>
<gene>
    <name evidence="1" type="primary">eno</name>
    <name type="ordered locus">YpsIP31758_3316</name>
</gene>
<evidence type="ECO:0000255" key="1">
    <source>
        <dbReference type="HAMAP-Rule" id="MF_00318"/>
    </source>
</evidence>